<gene>
    <name evidence="1" type="primary">nadK</name>
    <name type="ordered locus">MK0742</name>
</gene>
<organism>
    <name type="scientific">Methanopyrus kandleri (strain AV19 / DSM 6324 / JCM 9639 / NBRC 100938)</name>
    <dbReference type="NCBI Taxonomy" id="190192"/>
    <lineage>
        <taxon>Archaea</taxon>
        <taxon>Methanobacteriati</taxon>
        <taxon>Methanobacteriota</taxon>
        <taxon>Methanomada group</taxon>
        <taxon>Methanopyri</taxon>
        <taxon>Methanopyrales</taxon>
        <taxon>Methanopyraceae</taxon>
        <taxon>Methanopyrus</taxon>
    </lineage>
</organism>
<feature type="chain" id="PRO_0000120701" description="NAD kinase">
    <location>
        <begin position="1"/>
        <end position="276"/>
    </location>
</feature>
<feature type="active site" description="Proton acceptor" evidence="1">
    <location>
        <position position="68"/>
    </location>
</feature>
<feature type="binding site" evidence="1">
    <location>
        <begin position="68"/>
        <end position="69"/>
    </location>
    <ligand>
        <name>NAD(+)</name>
        <dbReference type="ChEBI" id="CHEBI:57540"/>
    </ligand>
</feature>
<feature type="binding site" evidence="1">
    <location>
        <position position="73"/>
    </location>
    <ligand>
        <name>NAD(+)</name>
        <dbReference type="ChEBI" id="CHEBI:57540"/>
    </ligand>
</feature>
<feature type="binding site" evidence="1">
    <location>
        <begin position="138"/>
        <end position="139"/>
    </location>
    <ligand>
        <name>NAD(+)</name>
        <dbReference type="ChEBI" id="CHEBI:57540"/>
    </ligand>
</feature>
<feature type="binding site" evidence="1">
    <location>
        <position position="149"/>
    </location>
    <ligand>
        <name>NAD(+)</name>
        <dbReference type="ChEBI" id="CHEBI:57540"/>
    </ligand>
</feature>
<feature type="binding site" evidence="1">
    <location>
        <position position="168"/>
    </location>
    <ligand>
        <name>NAD(+)</name>
        <dbReference type="ChEBI" id="CHEBI:57540"/>
    </ligand>
</feature>
<feature type="binding site" evidence="1">
    <location>
        <begin position="179"/>
        <end position="184"/>
    </location>
    <ligand>
        <name>NAD(+)</name>
        <dbReference type="ChEBI" id="CHEBI:57540"/>
    </ligand>
</feature>
<feature type="binding site" evidence="1">
    <location>
        <position position="237"/>
    </location>
    <ligand>
        <name>NAD(+)</name>
        <dbReference type="ChEBI" id="CHEBI:57540"/>
    </ligand>
</feature>
<sequence>MFRPQVVGVTGRTDLGRAVRVAERVCRLCDREGFEVLVDDSLGIGEYPRVNLKDMGKEVDMIITIGGDGTILRVSRITSEYEVPILGVNLGKFGFLTEVSESGLKEAVSRLARGDFNLEEHRKLRIKIGGSDEGDALNEVTVITSRPAKMIRYRLSIDGFELETTWADGVLVATPTGSTAYSLSAGGPIVEPQVECSIITPLNPFKLEARPMVVSMDRRVEIDVDDPERAEVVVDGQEYMNLDGTVSVTRSPNVARFIRFGSTYFERLKEKFLRWD</sequence>
<evidence type="ECO:0000255" key="1">
    <source>
        <dbReference type="HAMAP-Rule" id="MF_00361"/>
    </source>
</evidence>
<protein>
    <recommendedName>
        <fullName evidence="1">NAD kinase</fullName>
        <ecNumber evidence="1">2.7.1.23</ecNumber>
    </recommendedName>
    <alternativeName>
        <fullName evidence="1">ATP-dependent NAD kinase</fullName>
    </alternativeName>
</protein>
<accession>Q8TXD2</accession>
<dbReference type="EC" id="2.7.1.23" evidence="1"/>
<dbReference type="EMBL" id="AE009439">
    <property type="protein sequence ID" value="AAM01956.1"/>
    <property type="molecule type" value="Genomic_DNA"/>
</dbReference>
<dbReference type="RefSeq" id="WP_011019111.1">
    <property type="nucleotide sequence ID" value="NC_003551.1"/>
</dbReference>
<dbReference type="SMR" id="Q8TXD2"/>
<dbReference type="STRING" id="190192.MK0742"/>
<dbReference type="PaxDb" id="190192-MK0742"/>
<dbReference type="EnsemblBacteria" id="AAM01956">
    <property type="protein sequence ID" value="AAM01956"/>
    <property type="gene ID" value="MK0742"/>
</dbReference>
<dbReference type="GeneID" id="1476843"/>
<dbReference type="KEGG" id="mka:MK0742"/>
<dbReference type="PATRIC" id="fig|190192.8.peg.782"/>
<dbReference type="HOGENOM" id="CLU_008831_0_3_2"/>
<dbReference type="InParanoid" id="Q8TXD2"/>
<dbReference type="OrthoDB" id="359524at2157"/>
<dbReference type="Proteomes" id="UP000001826">
    <property type="component" value="Chromosome"/>
</dbReference>
<dbReference type="GO" id="GO:0005737">
    <property type="term" value="C:cytoplasm"/>
    <property type="evidence" value="ECO:0007669"/>
    <property type="project" value="UniProtKB-SubCell"/>
</dbReference>
<dbReference type="GO" id="GO:0005524">
    <property type="term" value="F:ATP binding"/>
    <property type="evidence" value="ECO:0007669"/>
    <property type="project" value="UniProtKB-KW"/>
</dbReference>
<dbReference type="GO" id="GO:0046872">
    <property type="term" value="F:metal ion binding"/>
    <property type="evidence" value="ECO:0007669"/>
    <property type="project" value="UniProtKB-UniRule"/>
</dbReference>
<dbReference type="GO" id="GO:0003951">
    <property type="term" value="F:NAD+ kinase activity"/>
    <property type="evidence" value="ECO:0007669"/>
    <property type="project" value="UniProtKB-UniRule"/>
</dbReference>
<dbReference type="GO" id="GO:0019674">
    <property type="term" value="P:NAD metabolic process"/>
    <property type="evidence" value="ECO:0007669"/>
    <property type="project" value="InterPro"/>
</dbReference>
<dbReference type="GO" id="GO:0006741">
    <property type="term" value="P:NADP biosynthetic process"/>
    <property type="evidence" value="ECO:0007669"/>
    <property type="project" value="UniProtKB-UniRule"/>
</dbReference>
<dbReference type="Gene3D" id="3.40.50.10330">
    <property type="entry name" value="Probable inorganic polyphosphate/atp-NAD kinase, domain 1"/>
    <property type="match status" value="1"/>
</dbReference>
<dbReference type="Gene3D" id="2.60.200.30">
    <property type="entry name" value="Probable inorganic polyphosphate/atp-NAD kinase, domain 2"/>
    <property type="match status" value="1"/>
</dbReference>
<dbReference type="HAMAP" id="MF_00361">
    <property type="entry name" value="NAD_kinase"/>
    <property type="match status" value="1"/>
</dbReference>
<dbReference type="InterPro" id="IPR017438">
    <property type="entry name" value="ATP-NAD_kinase_N"/>
</dbReference>
<dbReference type="InterPro" id="IPR017437">
    <property type="entry name" value="ATP-NAD_kinase_PpnK-typ_C"/>
</dbReference>
<dbReference type="InterPro" id="IPR016064">
    <property type="entry name" value="NAD/diacylglycerol_kinase_sf"/>
</dbReference>
<dbReference type="InterPro" id="IPR002504">
    <property type="entry name" value="NADK"/>
</dbReference>
<dbReference type="PANTHER" id="PTHR20275:SF43">
    <property type="entry name" value="BIFUNCTIONAL NADP PHOSPHATASE_NAD KINASE"/>
    <property type="match status" value="1"/>
</dbReference>
<dbReference type="PANTHER" id="PTHR20275">
    <property type="entry name" value="NAD KINASE"/>
    <property type="match status" value="1"/>
</dbReference>
<dbReference type="Pfam" id="PF01513">
    <property type="entry name" value="NAD_kinase"/>
    <property type="match status" value="1"/>
</dbReference>
<dbReference type="Pfam" id="PF20143">
    <property type="entry name" value="NAD_kinase_C"/>
    <property type="match status" value="1"/>
</dbReference>
<dbReference type="SUPFAM" id="SSF111331">
    <property type="entry name" value="NAD kinase/diacylglycerol kinase-like"/>
    <property type="match status" value="1"/>
</dbReference>
<comment type="function">
    <text evidence="1">Involved in the regulation of the intracellular balance of NAD and NADP, and is a key enzyme in the biosynthesis of NADP. Catalyzes specifically the phosphorylation on 2'-hydroxyl of the adenosine moiety of NAD to yield NADP.</text>
</comment>
<comment type="catalytic activity">
    <reaction evidence="1">
        <text>NAD(+) + ATP = ADP + NADP(+) + H(+)</text>
        <dbReference type="Rhea" id="RHEA:18629"/>
        <dbReference type="ChEBI" id="CHEBI:15378"/>
        <dbReference type="ChEBI" id="CHEBI:30616"/>
        <dbReference type="ChEBI" id="CHEBI:57540"/>
        <dbReference type="ChEBI" id="CHEBI:58349"/>
        <dbReference type="ChEBI" id="CHEBI:456216"/>
        <dbReference type="EC" id="2.7.1.23"/>
    </reaction>
</comment>
<comment type="cofactor">
    <cofactor evidence="1">
        <name>a divalent metal cation</name>
        <dbReference type="ChEBI" id="CHEBI:60240"/>
    </cofactor>
</comment>
<comment type="subcellular location">
    <subcellularLocation>
        <location evidence="1">Cytoplasm</location>
    </subcellularLocation>
</comment>
<comment type="similarity">
    <text evidence="1">Belongs to the NAD kinase family.</text>
</comment>
<reference key="1">
    <citation type="journal article" date="2002" name="Proc. Natl. Acad. Sci. U.S.A.">
        <title>The complete genome of hyperthermophile Methanopyrus kandleri AV19 and monophyly of archaeal methanogens.</title>
        <authorList>
            <person name="Slesarev A.I."/>
            <person name="Mezhevaya K.V."/>
            <person name="Makarova K.S."/>
            <person name="Polushin N.N."/>
            <person name="Shcherbinina O.V."/>
            <person name="Shakhova V.V."/>
            <person name="Belova G.I."/>
            <person name="Aravind L."/>
            <person name="Natale D.A."/>
            <person name="Rogozin I.B."/>
            <person name="Tatusov R.L."/>
            <person name="Wolf Y.I."/>
            <person name="Stetter K.O."/>
            <person name="Malykh A.G."/>
            <person name="Koonin E.V."/>
            <person name="Kozyavkin S.A."/>
        </authorList>
    </citation>
    <scope>NUCLEOTIDE SEQUENCE [LARGE SCALE GENOMIC DNA]</scope>
    <source>
        <strain>AV19 / DSM 6324 / JCM 9639 / NBRC 100938</strain>
    </source>
</reference>
<keyword id="KW-0067">ATP-binding</keyword>
<keyword id="KW-0963">Cytoplasm</keyword>
<keyword id="KW-0418">Kinase</keyword>
<keyword id="KW-0520">NAD</keyword>
<keyword id="KW-0521">NADP</keyword>
<keyword id="KW-0547">Nucleotide-binding</keyword>
<keyword id="KW-1185">Reference proteome</keyword>
<keyword id="KW-0808">Transferase</keyword>
<name>NADK_METKA</name>
<proteinExistence type="inferred from homology"/>